<organism>
    <name type="scientific">Salinispora tropica (strain ATCC BAA-916 / DSM 44818 / JCM 13857 / NBRC 105044 / CNB-440)</name>
    <dbReference type="NCBI Taxonomy" id="369723"/>
    <lineage>
        <taxon>Bacteria</taxon>
        <taxon>Bacillati</taxon>
        <taxon>Actinomycetota</taxon>
        <taxon>Actinomycetes</taxon>
        <taxon>Micromonosporales</taxon>
        <taxon>Micromonosporaceae</taxon>
        <taxon>Salinispora</taxon>
    </lineage>
</organism>
<proteinExistence type="inferred from homology"/>
<accession>A4X4P8</accession>
<keyword id="KW-0963">Cytoplasm</keyword>
<keyword id="KW-0460">Magnesium</keyword>
<keyword id="KW-0479">Metal-binding</keyword>
<keyword id="KW-0548">Nucleotidyltransferase</keyword>
<keyword id="KW-1185">Reference proteome</keyword>
<keyword id="KW-0694">RNA-binding</keyword>
<keyword id="KW-0808">Transferase</keyword>
<gene>
    <name evidence="1" type="primary">pnp</name>
    <name type="ordered locus">Strop_1381</name>
</gene>
<comment type="function">
    <text evidence="1">Involved in mRNA degradation. Catalyzes the phosphorolysis of single-stranded polyribonucleotides processively in the 3'- to 5'-direction.</text>
</comment>
<comment type="catalytic activity">
    <reaction evidence="1">
        <text>RNA(n+1) + phosphate = RNA(n) + a ribonucleoside 5'-diphosphate</text>
        <dbReference type="Rhea" id="RHEA:22096"/>
        <dbReference type="Rhea" id="RHEA-COMP:14527"/>
        <dbReference type="Rhea" id="RHEA-COMP:17342"/>
        <dbReference type="ChEBI" id="CHEBI:43474"/>
        <dbReference type="ChEBI" id="CHEBI:57930"/>
        <dbReference type="ChEBI" id="CHEBI:140395"/>
        <dbReference type="EC" id="2.7.7.8"/>
    </reaction>
</comment>
<comment type="cofactor">
    <cofactor evidence="1">
        <name>Mg(2+)</name>
        <dbReference type="ChEBI" id="CHEBI:18420"/>
    </cofactor>
</comment>
<comment type="subcellular location">
    <subcellularLocation>
        <location evidence="1">Cytoplasm</location>
    </subcellularLocation>
</comment>
<comment type="similarity">
    <text evidence="1">Belongs to the polyribonucleotide nucleotidyltransferase family.</text>
</comment>
<protein>
    <recommendedName>
        <fullName evidence="1">Polyribonucleotide nucleotidyltransferase</fullName>
        <ecNumber evidence="1">2.7.7.8</ecNumber>
    </recommendedName>
    <alternativeName>
        <fullName evidence="1">Polynucleotide phosphorylase</fullName>
        <shortName evidence="1">PNPase</shortName>
    </alternativeName>
</protein>
<sequence length="785" mass="83931">MTESNLGTESRTATIDNGAFGTRVITFSTGRLARQAAGSVVAQLGETVVLSATTVGRQPKEHFDFFPLTVDVEERMYAAGRIPGSFFRREGRPSEDAILTCRLIDRPLRPSFVKGLRNEVQVVETVLALDPSHPYDVVAINAASMSTKLSGLPFSGPIGATRMAHIDGSWVAFPTHEELVRATFDMVVAGRALPDGDVAIMMVEAEATAHTAKLVADGASAPTEEVVASGLEAAKPAIRELCRAQSELAEVAAKPVAEFPVFLDYSDDVYDAVTELAREDVAEALKIAGKADREEALDRIKARAVEELGPRFEGREKELSAALRSLTKSEVRSRVLREQVRIDGRGPRDIRPLTAEVGVLPRVHGSALFERGETQIMGVTTLNMLRMEQSLDTLSPEKSKRYMHNYNFPPYSTGETGRVGSPKRREIGHGALAERALIPVLPSREEFPYAIRQVSEALGSNGSTSMGSVCASTLGLLSAGVPLKAPVAGIAMGLISDEVEGKTRYVTLTDILGAEDAFGDMDFKVAGTQEFVTALQLDTKLDGIPSDVLAAALQQAYEARQTILEVMQAAIEAPATMSDYAPRVTTVKIPVDKIGMVIGPKGQTINAIQDETGAEISIEDDGTIYVGATNGPAAQAAVERINGIANPTLPKVGDRFLGTVVKTAAFGAFISLLPGRDGLLHISKVGDGKRVEKVEDFLNVGDKVEVEIADIDQRGKIYLDKVRPEGAEAPAEGAAERPAGRDRGDRGPRDRGDRGGRGPDRGDSGDGGDGGEGGESRPRRRTRRS</sequence>
<dbReference type="EC" id="2.7.7.8" evidence="1"/>
<dbReference type="EMBL" id="CP000667">
    <property type="protein sequence ID" value="ABP53848.1"/>
    <property type="molecule type" value="Genomic_DNA"/>
</dbReference>
<dbReference type="RefSeq" id="WP_011905280.1">
    <property type="nucleotide sequence ID" value="NC_009380.1"/>
</dbReference>
<dbReference type="SMR" id="A4X4P8"/>
<dbReference type="STRING" id="369723.Strop_1381"/>
<dbReference type="KEGG" id="stp:Strop_1381"/>
<dbReference type="PATRIC" id="fig|369723.5.peg.1408"/>
<dbReference type="eggNOG" id="COG1185">
    <property type="taxonomic scope" value="Bacteria"/>
</dbReference>
<dbReference type="HOGENOM" id="CLU_004217_2_2_11"/>
<dbReference type="Proteomes" id="UP000000235">
    <property type="component" value="Chromosome"/>
</dbReference>
<dbReference type="GO" id="GO:0005829">
    <property type="term" value="C:cytosol"/>
    <property type="evidence" value="ECO:0007669"/>
    <property type="project" value="TreeGrafter"/>
</dbReference>
<dbReference type="GO" id="GO:0000175">
    <property type="term" value="F:3'-5'-RNA exonuclease activity"/>
    <property type="evidence" value="ECO:0007669"/>
    <property type="project" value="TreeGrafter"/>
</dbReference>
<dbReference type="GO" id="GO:0000287">
    <property type="term" value="F:magnesium ion binding"/>
    <property type="evidence" value="ECO:0007669"/>
    <property type="project" value="UniProtKB-UniRule"/>
</dbReference>
<dbReference type="GO" id="GO:0004654">
    <property type="term" value="F:polyribonucleotide nucleotidyltransferase activity"/>
    <property type="evidence" value="ECO:0007669"/>
    <property type="project" value="UniProtKB-UniRule"/>
</dbReference>
<dbReference type="GO" id="GO:0003723">
    <property type="term" value="F:RNA binding"/>
    <property type="evidence" value="ECO:0007669"/>
    <property type="project" value="UniProtKB-UniRule"/>
</dbReference>
<dbReference type="GO" id="GO:0006402">
    <property type="term" value="P:mRNA catabolic process"/>
    <property type="evidence" value="ECO:0007669"/>
    <property type="project" value="UniProtKB-UniRule"/>
</dbReference>
<dbReference type="GO" id="GO:0006396">
    <property type="term" value="P:RNA processing"/>
    <property type="evidence" value="ECO:0007669"/>
    <property type="project" value="InterPro"/>
</dbReference>
<dbReference type="CDD" id="cd02393">
    <property type="entry name" value="KH-I_PNPase"/>
    <property type="match status" value="1"/>
</dbReference>
<dbReference type="CDD" id="cd11364">
    <property type="entry name" value="RNase_PH_PNPase_2"/>
    <property type="match status" value="1"/>
</dbReference>
<dbReference type="FunFam" id="2.40.50.140:FF:000069">
    <property type="entry name" value="Polyribonucleotide nucleotidyltransferase"/>
    <property type="match status" value="1"/>
</dbReference>
<dbReference type="FunFam" id="3.30.1370.10:FF:000001">
    <property type="entry name" value="Polyribonucleotide nucleotidyltransferase"/>
    <property type="match status" value="1"/>
</dbReference>
<dbReference type="FunFam" id="3.30.230.70:FF:000001">
    <property type="entry name" value="Polyribonucleotide nucleotidyltransferase"/>
    <property type="match status" value="1"/>
</dbReference>
<dbReference type="FunFam" id="3.30.230.70:FF:000002">
    <property type="entry name" value="Polyribonucleotide nucleotidyltransferase"/>
    <property type="match status" value="1"/>
</dbReference>
<dbReference type="Gene3D" id="3.30.230.70">
    <property type="entry name" value="GHMP Kinase, N-terminal domain"/>
    <property type="match status" value="2"/>
</dbReference>
<dbReference type="Gene3D" id="3.30.1370.10">
    <property type="entry name" value="K Homology domain, type 1"/>
    <property type="match status" value="1"/>
</dbReference>
<dbReference type="Gene3D" id="2.40.50.140">
    <property type="entry name" value="Nucleic acid-binding proteins"/>
    <property type="match status" value="1"/>
</dbReference>
<dbReference type="HAMAP" id="MF_01595">
    <property type="entry name" value="PNPase"/>
    <property type="match status" value="1"/>
</dbReference>
<dbReference type="InterPro" id="IPR001247">
    <property type="entry name" value="ExoRNase_PH_dom1"/>
</dbReference>
<dbReference type="InterPro" id="IPR036345">
    <property type="entry name" value="ExoRNase_PH_dom2_sf"/>
</dbReference>
<dbReference type="InterPro" id="IPR014069">
    <property type="entry name" value="GPSI/PNP"/>
</dbReference>
<dbReference type="InterPro" id="IPR004087">
    <property type="entry name" value="KH_dom"/>
</dbReference>
<dbReference type="InterPro" id="IPR004088">
    <property type="entry name" value="KH_dom_type_1"/>
</dbReference>
<dbReference type="InterPro" id="IPR036612">
    <property type="entry name" value="KH_dom_type_1_sf"/>
</dbReference>
<dbReference type="InterPro" id="IPR012340">
    <property type="entry name" value="NA-bd_OB-fold"/>
</dbReference>
<dbReference type="InterPro" id="IPR012162">
    <property type="entry name" value="PNPase"/>
</dbReference>
<dbReference type="InterPro" id="IPR027408">
    <property type="entry name" value="PNPase/RNase_PH_dom_sf"/>
</dbReference>
<dbReference type="InterPro" id="IPR015848">
    <property type="entry name" value="PNPase_PH_RNA-bd_bac/org-type"/>
</dbReference>
<dbReference type="InterPro" id="IPR036456">
    <property type="entry name" value="PNPase_PH_RNA-bd_sf"/>
</dbReference>
<dbReference type="InterPro" id="IPR020568">
    <property type="entry name" value="Ribosomal_Su5_D2-typ_SF"/>
</dbReference>
<dbReference type="InterPro" id="IPR003029">
    <property type="entry name" value="S1_domain"/>
</dbReference>
<dbReference type="NCBIfam" id="TIGR03591">
    <property type="entry name" value="polynuc_phos"/>
    <property type="match status" value="1"/>
</dbReference>
<dbReference type="NCBIfam" id="TIGR02696">
    <property type="entry name" value="pppGpp_PNP"/>
    <property type="match status" value="1"/>
</dbReference>
<dbReference type="NCBIfam" id="NF008805">
    <property type="entry name" value="PRK11824.1"/>
    <property type="match status" value="1"/>
</dbReference>
<dbReference type="PANTHER" id="PTHR11252">
    <property type="entry name" value="POLYRIBONUCLEOTIDE NUCLEOTIDYLTRANSFERASE"/>
    <property type="match status" value="1"/>
</dbReference>
<dbReference type="PANTHER" id="PTHR11252:SF0">
    <property type="entry name" value="POLYRIBONUCLEOTIDE NUCLEOTIDYLTRANSFERASE 1, MITOCHONDRIAL"/>
    <property type="match status" value="1"/>
</dbReference>
<dbReference type="Pfam" id="PF00013">
    <property type="entry name" value="KH_1"/>
    <property type="match status" value="1"/>
</dbReference>
<dbReference type="Pfam" id="PF03726">
    <property type="entry name" value="PNPase"/>
    <property type="match status" value="1"/>
</dbReference>
<dbReference type="Pfam" id="PF01138">
    <property type="entry name" value="RNase_PH"/>
    <property type="match status" value="2"/>
</dbReference>
<dbReference type="Pfam" id="PF00575">
    <property type="entry name" value="S1"/>
    <property type="match status" value="1"/>
</dbReference>
<dbReference type="PIRSF" id="PIRSF005499">
    <property type="entry name" value="PNPase"/>
    <property type="match status" value="1"/>
</dbReference>
<dbReference type="SMART" id="SM00322">
    <property type="entry name" value="KH"/>
    <property type="match status" value="1"/>
</dbReference>
<dbReference type="SMART" id="SM00316">
    <property type="entry name" value="S1"/>
    <property type="match status" value="1"/>
</dbReference>
<dbReference type="SUPFAM" id="SSF54791">
    <property type="entry name" value="Eukaryotic type KH-domain (KH-domain type I)"/>
    <property type="match status" value="1"/>
</dbReference>
<dbReference type="SUPFAM" id="SSF50249">
    <property type="entry name" value="Nucleic acid-binding proteins"/>
    <property type="match status" value="1"/>
</dbReference>
<dbReference type="SUPFAM" id="SSF46915">
    <property type="entry name" value="Polynucleotide phosphorylase/guanosine pentaphosphate synthase (PNPase/GPSI), domain 3"/>
    <property type="match status" value="1"/>
</dbReference>
<dbReference type="SUPFAM" id="SSF55666">
    <property type="entry name" value="Ribonuclease PH domain 2-like"/>
    <property type="match status" value="2"/>
</dbReference>
<dbReference type="SUPFAM" id="SSF54211">
    <property type="entry name" value="Ribosomal protein S5 domain 2-like"/>
    <property type="match status" value="2"/>
</dbReference>
<dbReference type="PROSITE" id="PS50084">
    <property type="entry name" value="KH_TYPE_1"/>
    <property type="match status" value="1"/>
</dbReference>
<dbReference type="PROSITE" id="PS50126">
    <property type="entry name" value="S1"/>
    <property type="match status" value="1"/>
</dbReference>
<evidence type="ECO:0000255" key="1">
    <source>
        <dbReference type="HAMAP-Rule" id="MF_01595"/>
    </source>
</evidence>
<evidence type="ECO:0000256" key="2">
    <source>
        <dbReference type="SAM" id="MobiDB-lite"/>
    </source>
</evidence>
<name>PNP_SALTO</name>
<feature type="chain" id="PRO_0000329828" description="Polyribonucleotide nucleotidyltransferase">
    <location>
        <begin position="1"/>
        <end position="785"/>
    </location>
</feature>
<feature type="domain" description="KH" evidence="1">
    <location>
        <begin position="582"/>
        <end position="641"/>
    </location>
</feature>
<feature type="domain" description="S1 motif" evidence="1">
    <location>
        <begin position="653"/>
        <end position="722"/>
    </location>
</feature>
<feature type="region of interest" description="Disordered" evidence="2">
    <location>
        <begin position="722"/>
        <end position="785"/>
    </location>
</feature>
<feature type="compositionally biased region" description="Basic and acidic residues" evidence="2">
    <location>
        <begin position="734"/>
        <end position="764"/>
    </location>
</feature>
<feature type="binding site" evidence="1">
    <location>
        <position position="516"/>
    </location>
    <ligand>
        <name>Mg(2+)</name>
        <dbReference type="ChEBI" id="CHEBI:18420"/>
    </ligand>
</feature>
<feature type="binding site" evidence="1">
    <location>
        <position position="522"/>
    </location>
    <ligand>
        <name>Mg(2+)</name>
        <dbReference type="ChEBI" id="CHEBI:18420"/>
    </ligand>
</feature>
<reference key="1">
    <citation type="journal article" date="2007" name="Proc. Natl. Acad. Sci. U.S.A.">
        <title>Genome sequencing reveals complex secondary metabolome in the marine actinomycete Salinispora tropica.</title>
        <authorList>
            <person name="Udwary D.W."/>
            <person name="Zeigler L."/>
            <person name="Asolkar R.N."/>
            <person name="Singan V."/>
            <person name="Lapidus A."/>
            <person name="Fenical W."/>
            <person name="Jensen P.R."/>
            <person name="Moore B.S."/>
        </authorList>
    </citation>
    <scope>NUCLEOTIDE SEQUENCE [LARGE SCALE GENOMIC DNA]</scope>
    <source>
        <strain>ATCC BAA-916 / DSM 44818 / JCM 13857 / NBRC 105044 / CNB-440</strain>
    </source>
</reference>